<organism>
    <name type="scientific">Synechocystis sp. (strain ATCC 27184 / PCC 6803 / Kazusa)</name>
    <dbReference type="NCBI Taxonomy" id="1111708"/>
    <lineage>
        <taxon>Bacteria</taxon>
        <taxon>Bacillati</taxon>
        <taxon>Cyanobacteriota</taxon>
        <taxon>Cyanophyceae</taxon>
        <taxon>Synechococcales</taxon>
        <taxon>Merismopediaceae</taxon>
        <taxon>Synechocystis</taxon>
    </lineage>
</organism>
<keyword id="KW-0067">ATP-binding</keyword>
<keyword id="KW-0963">Cytoplasm</keyword>
<keyword id="KW-0227">DNA damage</keyword>
<keyword id="KW-0228">DNA excision</keyword>
<keyword id="KW-0234">DNA repair</keyword>
<keyword id="KW-0238">DNA-binding</keyword>
<keyword id="KW-0267">Excision nuclease</keyword>
<keyword id="KW-0479">Metal-binding</keyword>
<keyword id="KW-0547">Nucleotide-binding</keyword>
<keyword id="KW-1185">Reference proteome</keyword>
<keyword id="KW-0677">Repeat</keyword>
<keyword id="KW-0862">Zinc</keyword>
<keyword id="KW-0863">Zinc-finger</keyword>
<protein>
    <recommendedName>
        <fullName evidence="1">UvrABC system protein A</fullName>
        <shortName evidence="1">UvrA protein</shortName>
    </recommendedName>
    <alternativeName>
        <fullName evidence="1">Excinuclease ABC subunit A</fullName>
    </alternativeName>
</protein>
<feature type="chain" id="PRO_0000093106" description="UvrABC system protein A">
    <location>
        <begin position="1"/>
        <end position="970"/>
    </location>
</feature>
<feature type="domain" description="ABC transporter 1" evidence="1">
    <location>
        <begin position="340"/>
        <end position="617"/>
    </location>
</feature>
<feature type="domain" description="ABC transporter 2" evidence="1">
    <location>
        <begin position="637"/>
        <end position="965"/>
    </location>
</feature>
<feature type="zinc finger region" description="C4-type" evidence="1">
    <location>
        <begin position="284"/>
        <end position="311"/>
    </location>
</feature>
<feature type="zinc finger region" description="C4-type" evidence="1">
    <location>
        <begin position="768"/>
        <end position="794"/>
    </location>
</feature>
<feature type="binding site" evidence="1">
    <location>
        <begin position="34"/>
        <end position="41"/>
    </location>
    <ligand>
        <name>ATP</name>
        <dbReference type="ChEBI" id="CHEBI:30616"/>
    </ligand>
</feature>
<feature type="binding site" evidence="1">
    <location>
        <begin position="669"/>
        <end position="676"/>
    </location>
    <ligand>
        <name>ATP</name>
        <dbReference type="ChEBI" id="CHEBI:30616"/>
    </ligand>
</feature>
<accession>P73412</accession>
<evidence type="ECO:0000255" key="1">
    <source>
        <dbReference type="HAMAP-Rule" id="MF_00205"/>
    </source>
</evidence>
<evidence type="ECO:0000305" key="2">
    <source>
    </source>
</evidence>
<name>UVRA_SYNY3</name>
<sequence>MPEQNSIRIRGARQHNLKNVNLDLPRDRLIVFTGVSGSGKSSLAFDTIFAEGQRRYVESLSAYARQFLGQLDKPDVDSIEGLSPAISIDQKSTSHNPRSTVGTVTEIYDYLRLLFGRAGSPHCPHCQRNIAPQTIDQMCDRVMELPDRTKFQILAPVVKGKKGTHVQLLSSLVSQGFVRVRINGEVRELSDNIELKKNQAHTIEIVIDRLIKKEGLQERLVDSLSTCLKQAEGTAIIDILDKPTLAVLDGGKKDDKEALKAAENGQAYHAELPKEIIFSENFACPEHGAVMDELSPRLFSFNSPYGACPDCHGIGFVRSFCPDLVIPDPEKPVYVAIAPWSEKDNSYYLSLLYSLGQHFDFQLQTPWKKLTKEQKEIILYGTEEEIWFEGESRYRNKQGYYRRFAGALNILQKNYDETNSDAIKQKLEKYIINQPCHTCGGKRLKPEALAVKLGQYNINNLTSVPIRQTLERIENLELTSRQAMIGELALKEIKARLQFLLDVGLDYLTLDRAAMTLSGGEAQRIRLATQIGSGLTGVLYVLDEPSIGLHQRDNNRLLATLTKLRDLGNTLIVVEHDEDTIRHADYIVDIGPKAGIHGGEIVCQGDFQTLLKNQRSLTGAYLSGREAIATPEERRNGNGAKLTLQGCCHNNLRNIDVTIPLGKLVCVTGVSGSGKSTLVNELLHPALQHYLSRQVAFPKNLGEITGLQAIDKVIVIDQSPIGRTPRSNPATYTGIFDSIREIFTQTIEAKARGYKPGQFSFNVKGGRCEACAGQGVNVIEMNFLPDVYVQCDVCKGARYNRETLQVKYKGHSIADVLAMTTEEALTVFENIPRAVNRLQTLVDVGLGYIKLGQPAPTLSGGEAQRVKLASELSRRATGKTLYLIDEPTTGLSFYDVHHLLNVLQRLVDKGNSVLVIEHNLDVIRCSDWIIDLGPEGGDRGGKIMVAGTPETVAQHPSSYTGKYLAKVLQS</sequence>
<reference key="1">
    <citation type="journal article" date="1996" name="DNA Res.">
        <title>Sequence analysis of the genome of the unicellular cyanobacterium Synechocystis sp. strain PCC6803. II. Sequence determination of the entire genome and assignment of potential protein-coding regions.</title>
        <authorList>
            <person name="Kaneko T."/>
            <person name="Sato S."/>
            <person name="Kotani H."/>
            <person name="Tanaka A."/>
            <person name="Asamizu E."/>
            <person name="Nakamura Y."/>
            <person name="Miyajima N."/>
            <person name="Hirosawa M."/>
            <person name="Sugiura M."/>
            <person name="Sasamoto S."/>
            <person name="Kimura T."/>
            <person name="Hosouchi T."/>
            <person name="Matsuno A."/>
            <person name="Muraki A."/>
            <person name="Nakazaki N."/>
            <person name="Naruo K."/>
            <person name="Okumura S."/>
            <person name="Shimpo S."/>
            <person name="Takeuchi C."/>
            <person name="Wada T."/>
            <person name="Watanabe A."/>
            <person name="Yamada M."/>
            <person name="Yasuda M."/>
            <person name="Tabata S."/>
        </authorList>
    </citation>
    <scope>NUCLEOTIDE SEQUENCE [LARGE SCALE GENOMIC DNA]</scope>
    <source>
        <strain>ATCC 27184 / PCC 6803 / Kazusa</strain>
    </source>
</reference>
<reference key="2">
    <citation type="journal article" date="2004" name="Mol. Microbiol.">
        <title>Function and regulation of the cyanobacterial genes lexA, recA and ruvB: LexA is critical to the survival of cells facing inorganic carbon starvation.</title>
        <authorList>
            <person name="Domain F."/>
            <person name="Houot L."/>
            <person name="Chauvat F."/>
            <person name="Cassier-Chauvat C."/>
        </authorList>
    </citation>
    <scope>DISCUSSION OF SOS REGULON</scope>
    <source>
        <strain>ATCC 27184 / PCC 6803 / Kazusa</strain>
    </source>
</reference>
<comment type="function">
    <text evidence="1">The UvrABC repair system catalyzes the recognition and processing of DNA lesions. UvrA is an ATPase and a DNA-binding protein. A damage recognition complex composed of 2 UvrA and 2 UvrB subunits scans DNA for abnormalities. When the presence of a lesion has been verified by UvrB, the UvrA molecules dissociate.</text>
</comment>
<comment type="subunit">
    <text evidence="1">Forms a heterotetramer with UvrB during the search for lesions.</text>
</comment>
<comment type="subcellular location">
    <subcellularLocation>
        <location evidence="1">Cytoplasm</location>
    </subcellularLocation>
</comment>
<comment type="miscellaneous">
    <text evidence="2">This bacterium is considerably more resistant to UV and gamma irradiation than E.coli; the E.coli-like SOS regulon model is not an appropriate model for DNA repair in this cyanobacterium.</text>
</comment>
<comment type="similarity">
    <text evidence="1">Belongs to the ABC transporter superfamily. UvrA family.</text>
</comment>
<gene>
    <name evidence="1" type="primary">uvrA</name>
    <name type="ordered locus">slr1844</name>
</gene>
<dbReference type="EMBL" id="BA000022">
    <property type="protein sequence ID" value="BAA17452.1"/>
    <property type="molecule type" value="Genomic_DNA"/>
</dbReference>
<dbReference type="PIR" id="S77349">
    <property type="entry name" value="S77349"/>
</dbReference>
<dbReference type="SMR" id="P73412"/>
<dbReference type="FunCoup" id="P73412">
    <property type="interactions" value="318"/>
</dbReference>
<dbReference type="IntAct" id="P73412">
    <property type="interactions" value="2"/>
</dbReference>
<dbReference type="STRING" id="1148.gene:10498316"/>
<dbReference type="PaxDb" id="1148-1652531"/>
<dbReference type="EnsemblBacteria" id="BAA17452">
    <property type="protein sequence ID" value="BAA17452"/>
    <property type="gene ID" value="BAA17452"/>
</dbReference>
<dbReference type="KEGG" id="syn:slr1844"/>
<dbReference type="eggNOG" id="COG0178">
    <property type="taxonomic scope" value="Bacteria"/>
</dbReference>
<dbReference type="InParanoid" id="P73412"/>
<dbReference type="PhylomeDB" id="P73412"/>
<dbReference type="Proteomes" id="UP000001425">
    <property type="component" value="Chromosome"/>
</dbReference>
<dbReference type="GO" id="GO:0005737">
    <property type="term" value="C:cytoplasm"/>
    <property type="evidence" value="ECO:0007669"/>
    <property type="project" value="UniProtKB-SubCell"/>
</dbReference>
<dbReference type="GO" id="GO:0009380">
    <property type="term" value="C:excinuclease repair complex"/>
    <property type="evidence" value="ECO:0007669"/>
    <property type="project" value="InterPro"/>
</dbReference>
<dbReference type="GO" id="GO:0005524">
    <property type="term" value="F:ATP binding"/>
    <property type="evidence" value="ECO:0007669"/>
    <property type="project" value="UniProtKB-UniRule"/>
</dbReference>
<dbReference type="GO" id="GO:0016887">
    <property type="term" value="F:ATP hydrolysis activity"/>
    <property type="evidence" value="ECO:0007669"/>
    <property type="project" value="InterPro"/>
</dbReference>
<dbReference type="GO" id="GO:0003677">
    <property type="term" value="F:DNA binding"/>
    <property type="evidence" value="ECO:0007669"/>
    <property type="project" value="UniProtKB-UniRule"/>
</dbReference>
<dbReference type="GO" id="GO:0009381">
    <property type="term" value="F:excinuclease ABC activity"/>
    <property type="evidence" value="ECO:0007669"/>
    <property type="project" value="UniProtKB-UniRule"/>
</dbReference>
<dbReference type="GO" id="GO:0008270">
    <property type="term" value="F:zinc ion binding"/>
    <property type="evidence" value="ECO:0007669"/>
    <property type="project" value="UniProtKB-UniRule"/>
</dbReference>
<dbReference type="GO" id="GO:0006289">
    <property type="term" value="P:nucleotide-excision repair"/>
    <property type="evidence" value="ECO:0007669"/>
    <property type="project" value="UniProtKB-UniRule"/>
</dbReference>
<dbReference type="GO" id="GO:0009432">
    <property type="term" value="P:SOS response"/>
    <property type="evidence" value="ECO:0007669"/>
    <property type="project" value="UniProtKB-UniRule"/>
</dbReference>
<dbReference type="CDD" id="cd03270">
    <property type="entry name" value="ABC_UvrA_I"/>
    <property type="match status" value="2"/>
</dbReference>
<dbReference type="CDD" id="cd03271">
    <property type="entry name" value="ABC_UvrA_II"/>
    <property type="match status" value="1"/>
</dbReference>
<dbReference type="FunFam" id="1.20.1580.10:FF:000002">
    <property type="entry name" value="UvrABC system protein A"/>
    <property type="match status" value="1"/>
</dbReference>
<dbReference type="FunFam" id="3.40.50.300:FF:000028">
    <property type="entry name" value="UvrABC system protein A"/>
    <property type="match status" value="1"/>
</dbReference>
<dbReference type="Gene3D" id="1.10.8.280">
    <property type="entry name" value="ABC transporter ATPase domain-like"/>
    <property type="match status" value="1"/>
</dbReference>
<dbReference type="Gene3D" id="1.20.1580.10">
    <property type="entry name" value="ABC transporter ATPase like domain"/>
    <property type="match status" value="2"/>
</dbReference>
<dbReference type="Gene3D" id="3.30.1490.20">
    <property type="entry name" value="ATP-grasp fold, A domain"/>
    <property type="match status" value="1"/>
</dbReference>
<dbReference type="Gene3D" id="3.40.50.300">
    <property type="entry name" value="P-loop containing nucleotide triphosphate hydrolases"/>
    <property type="match status" value="2"/>
</dbReference>
<dbReference type="HAMAP" id="MF_00205">
    <property type="entry name" value="UvrA"/>
    <property type="match status" value="1"/>
</dbReference>
<dbReference type="InterPro" id="IPR003439">
    <property type="entry name" value="ABC_transporter-like_ATP-bd"/>
</dbReference>
<dbReference type="InterPro" id="IPR017871">
    <property type="entry name" value="ABC_transporter-like_CS"/>
</dbReference>
<dbReference type="InterPro" id="IPR013815">
    <property type="entry name" value="ATP_grasp_subdomain_1"/>
</dbReference>
<dbReference type="InterPro" id="IPR027417">
    <property type="entry name" value="P-loop_NTPase"/>
</dbReference>
<dbReference type="InterPro" id="IPR004602">
    <property type="entry name" value="UvrA"/>
</dbReference>
<dbReference type="InterPro" id="IPR041552">
    <property type="entry name" value="UvrA_DNA-bd"/>
</dbReference>
<dbReference type="InterPro" id="IPR041102">
    <property type="entry name" value="UvrA_inter"/>
</dbReference>
<dbReference type="NCBIfam" id="NF001503">
    <property type="entry name" value="PRK00349.1"/>
    <property type="match status" value="1"/>
</dbReference>
<dbReference type="NCBIfam" id="TIGR00630">
    <property type="entry name" value="uvra"/>
    <property type="match status" value="1"/>
</dbReference>
<dbReference type="PANTHER" id="PTHR43152">
    <property type="entry name" value="UVRABC SYSTEM PROTEIN A"/>
    <property type="match status" value="1"/>
</dbReference>
<dbReference type="PANTHER" id="PTHR43152:SF3">
    <property type="entry name" value="UVRABC SYSTEM PROTEIN A"/>
    <property type="match status" value="1"/>
</dbReference>
<dbReference type="Pfam" id="PF17755">
    <property type="entry name" value="UvrA_DNA-bind"/>
    <property type="match status" value="1"/>
</dbReference>
<dbReference type="Pfam" id="PF17760">
    <property type="entry name" value="UvrA_inter"/>
    <property type="match status" value="1"/>
</dbReference>
<dbReference type="SUPFAM" id="SSF52540">
    <property type="entry name" value="P-loop containing nucleoside triphosphate hydrolases"/>
    <property type="match status" value="2"/>
</dbReference>
<dbReference type="PROSITE" id="PS00211">
    <property type="entry name" value="ABC_TRANSPORTER_1"/>
    <property type="match status" value="2"/>
</dbReference>
<dbReference type="PROSITE" id="PS50893">
    <property type="entry name" value="ABC_TRANSPORTER_2"/>
    <property type="match status" value="1"/>
</dbReference>
<proteinExistence type="inferred from homology"/>